<keyword id="KW-0131">Cell cycle</keyword>
<keyword id="KW-0132">Cell division</keyword>
<keyword id="KW-0137">Centromere</keyword>
<keyword id="KW-0158">Chromosome</keyword>
<keyword id="KW-0995">Kinetochore</keyword>
<keyword id="KW-0469">Meiosis</keyword>
<keyword id="KW-0498">Mitosis</keyword>
<keyword id="KW-0539">Nucleus</keyword>
<keyword id="KW-1185">Reference proteome</keyword>
<sequence length="210" mass="24891">MDLESEIIQLVRQNIRPKFPSLNDEQQARLDNALKYDVNYDILKKELVEYIDDWKRNEYYDVLTNIGDLQRLDLGNMLNGDGVSFPKLHSDLANLPRFRLIDNENEMDQSLLHKYDSLRTRLIEKCRAIELIRSATNTDVNYQDINSMLSVVELRQWRDEIQMEWKELAQNLELILKTWPDLTEEKRSKLLQLIDSSSLKSILHIKDNIE</sequence>
<dbReference type="EMBL" id="CR382125">
    <property type="protein sequence ID" value="CAG99162.1"/>
    <property type="molecule type" value="Genomic_DNA"/>
</dbReference>
<dbReference type="RefSeq" id="XP_454075.1">
    <property type="nucleotide sequence ID" value="XM_454075.1"/>
</dbReference>
<dbReference type="SMR" id="Q6CPR4"/>
<dbReference type="PaxDb" id="284590-Q6CPR4"/>
<dbReference type="KEGG" id="kla:KLLA0_E02883g"/>
<dbReference type="HOGENOM" id="CLU_1310316_0_0_1"/>
<dbReference type="InParanoid" id="Q6CPR4"/>
<dbReference type="Proteomes" id="UP000000598">
    <property type="component" value="Chromosome E"/>
</dbReference>
<dbReference type="GO" id="GO:0000776">
    <property type="term" value="C:kinetochore"/>
    <property type="evidence" value="ECO:0007669"/>
    <property type="project" value="UniProtKB-KW"/>
</dbReference>
<dbReference type="GO" id="GO:0005634">
    <property type="term" value="C:nucleus"/>
    <property type="evidence" value="ECO:0007669"/>
    <property type="project" value="UniProtKB-SubCell"/>
</dbReference>
<dbReference type="GO" id="GO:0051301">
    <property type="term" value="P:cell division"/>
    <property type="evidence" value="ECO:0007669"/>
    <property type="project" value="UniProtKB-KW"/>
</dbReference>
<dbReference type="GO" id="GO:0051321">
    <property type="term" value="P:meiotic cell cycle"/>
    <property type="evidence" value="ECO:0007669"/>
    <property type="project" value="UniProtKB-KW"/>
</dbReference>
<name>NKP1_KLULA</name>
<proteinExistence type="evidence at protein level"/>
<organism>
    <name type="scientific">Kluyveromyces lactis (strain ATCC 8585 / CBS 2359 / DSM 70799 / NBRC 1267 / NRRL Y-1140 / WM37)</name>
    <name type="common">Yeast</name>
    <name type="synonym">Candida sphaerica</name>
    <dbReference type="NCBI Taxonomy" id="284590"/>
    <lineage>
        <taxon>Eukaryota</taxon>
        <taxon>Fungi</taxon>
        <taxon>Dikarya</taxon>
        <taxon>Ascomycota</taxon>
        <taxon>Saccharomycotina</taxon>
        <taxon>Saccharomycetes</taxon>
        <taxon>Saccharomycetales</taxon>
        <taxon>Saccharomycetaceae</taxon>
        <taxon>Kluyveromyces</taxon>
    </lineage>
</organism>
<feature type="chain" id="PRO_0000443074" description="Inner kinetochore subunit NKP1">
    <location>
        <begin position="1"/>
        <end position="210"/>
    </location>
</feature>
<evidence type="ECO:0000250" key="1">
    <source>
        <dbReference type="UniProtKB" id="Q12493"/>
    </source>
</evidence>
<evidence type="ECO:0000269" key="2">
    <source>
    </source>
</evidence>
<evidence type="ECO:0000305" key="3"/>
<comment type="function">
    <text evidence="1 2">Component of the kinetochore, a multiprotein complex that assembles on centromeric DNA and attaches chromosomes to spindle microtubules, mediating chromosome segregation and sister chromatid segregation during meiosis and mitosis (By similarity). Component of the inner kinetochore constitutive centromere-associated network (CCAN), which serves as a structural platform for outer kinetochore assembly (PubMed:29046335).</text>
</comment>
<comment type="subunit">
    <text evidence="1 2">Component of the inner kinetochore constitutive centromere-associated network (CCAN) (also known as central kinetochore CTF19 complex in yeast) (By similarity). NKP1 interacts directly with OKP1 and AME1 (PubMed:29046335).</text>
</comment>
<comment type="subcellular location">
    <subcellularLocation>
        <location evidence="1">Nucleus</location>
    </subcellularLocation>
    <subcellularLocation>
        <location evidence="1">Chromosome</location>
        <location evidence="1">Centromere</location>
        <location evidence="1">Kinetochore</location>
    </subcellularLocation>
</comment>
<comment type="similarity">
    <text evidence="3">Belongs to the NKP1 family.</text>
</comment>
<gene>
    <name type="primary">NKP1</name>
    <name type="ordered locus">KLLA0E02883g</name>
</gene>
<protein>
    <recommendedName>
        <fullName>Inner kinetochore subunit NKP1</fullName>
    </recommendedName>
    <alternativeName>
        <fullName>Constitutive centromere-associated network protein NKP1</fullName>
    </alternativeName>
</protein>
<accession>Q6CPR4</accession>
<reference key="1">
    <citation type="journal article" date="2004" name="Nature">
        <title>Genome evolution in yeasts.</title>
        <authorList>
            <person name="Dujon B."/>
            <person name="Sherman D."/>
            <person name="Fischer G."/>
            <person name="Durrens P."/>
            <person name="Casaregola S."/>
            <person name="Lafontaine I."/>
            <person name="de Montigny J."/>
            <person name="Marck C."/>
            <person name="Neuveglise C."/>
            <person name="Talla E."/>
            <person name="Goffard N."/>
            <person name="Frangeul L."/>
            <person name="Aigle M."/>
            <person name="Anthouard V."/>
            <person name="Babour A."/>
            <person name="Barbe V."/>
            <person name="Barnay S."/>
            <person name="Blanchin S."/>
            <person name="Beckerich J.-M."/>
            <person name="Beyne E."/>
            <person name="Bleykasten C."/>
            <person name="Boisrame A."/>
            <person name="Boyer J."/>
            <person name="Cattolico L."/>
            <person name="Confanioleri F."/>
            <person name="de Daruvar A."/>
            <person name="Despons L."/>
            <person name="Fabre E."/>
            <person name="Fairhead C."/>
            <person name="Ferry-Dumazet H."/>
            <person name="Groppi A."/>
            <person name="Hantraye F."/>
            <person name="Hennequin C."/>
            <person name="Jauniaux N."/>
            <person name="Joyet P."/>
            <person name="Kachouri R."/>
            <person name="Kerrest A."/>
            <person name="Koszul R."/>
            <person name="Lemaire M."/>
            <person name="Lesur I."/>
            <person name="Ma L."/>
            <person name="Muller H."/>
            <person name="Nicaud J.-M."/>
            <person name="Nikolski M."/>
            <person name="Oztas S."/>
            <person name="Ozier-Kalogeropoulos O."/>
            <person name="Pellenz S."/>
            <person name="Potier S."/>
            <person name="Richard G.-F."/>
            <person name="Straub M.-L."/>
            <person name="Suleau A."/>
            <person name="Swennen D."/>
            <person name="Tekaia F."/>
            <person name="Wesolowski-Louvel M."/>
            <person name="Westhof E."/>
            <person name="Wirth B."/>
            <person name="Zeniou-Meyer M."/>
            <person name="Zivanovic Y."/>
            <person name="Bolotin-Fukuhara M."/>
            <person name="Thierry A."/>
            <person name="Bouchier C."/>
            <person name="Caudron B."/>
            <person name="Scarpelli C."/>
            <person name="Gaillardin C."/>
            <person name="Weissenbach J."/>
            <person name="Wincker P."/>
            <person name="Souciet J.-L."/>
        </authorList>
    </citation>
    <scope>NUCLEOTIDE SEQUENCE [LARGE SCALE GENOMIC DNA]</scope>
    <source>
        <strain>ATCC 8585 / CBS 2359 / DSM 70799 / NBRC 1267 / NRRL Y-1140 / WM37</strain>
    </source>
</reference>
<reference key="2">
    <citation type="journal article" date="2017" name="EMBO J.">
        <title>Molecular basis for inner kinetochore configuration through RWD domain-peptide interactions.</title>
        <authorList>
            <person name="Schmitzberger F."/>
            <person name="Richter M.M."/>
            <person name="Gordiyenko Y."/>
            <person name="Robinson C.V."/>
            <person name="Dadlez M."/>
            <person name="Westermann S."/>
        </authorList>
    </citation>
    <scope>SUBUNIT</scope>
    <scope>INTERACTION WITH AME1 AND OKP1</scope>
    <scope>FUNCTION</scope>
</reference>